<reference key="1">
    <citation type="journal article" date="2004" name="Nat. Genet.">
        <title>Comparison of genome degradation in Paratyphi A and Typhi, human-restricted serovars of Salmonella enterica that cause typhoid.</title>
        <authorList>
            <person name="McClelland M."/>
            <person name="Sanderson K.E."/>
            <person name="Clifton S.W."/>
            <person name="Latreille P."/>
            <person name="Porwollik S."/>
            <person name="Sabo A."/>
            <person name="Meyer R."/>
            <person name="Bieri T."/>
            <person name="Ozersky P."/>
            <person name="McLellan M."/>
            <person name="Harkins C.R."/>
            <person name="Wang C."/>
            <person name="Nguyen C."/>
            <person name="Berghoff A."/>
            <person name="Elliott G."/>
            <person name="Kohlberg S."/>
            <person name="Strong C."/>
            <person name="Du F."/>
            <person name="Carter J."/>
            <person name="Kremizki C."/>
            <person name="Layman D."/>
            <person name="Leonard S."/>
            <person name="Sun H."/>
            <person name="Fulton L."/>
            <person name="Nash W."/>
            <person name="Miner T."/>
            <person name="Minx P."/>
            <person name="Delehaunty K."/>
            <person name="Fronick C."/>
            <person name="Magrini V."/>
            <person name="Nhan M."/>
            <person name="Warren W."/>
            <person name="Florea L."/>
            <person name="Spieth J."/>
            <person name="Wilson R.K."/>
        </authorList>
    </citation>
    <scope>NUCLEOTIDE SEQUENCE [LARGE SCALE GENOMIC DNA]</scope>
    <source>
        <strain>ATCC 9150 / SARB42</strain>
    </source>
</reference>
<proteinExistence type="inferred from homology"/>
<protein>
    <recommendedName>
        <fullName evidence="1">Glutamyl-Q tRNA(Asp) synthetase</fullName>
        <shortName evidence="1">Glu-Q-RSs</shortName>
        <ecNumber evidence="1">6.1.1.-</ecNumber>
    </recommendedName>
</protein>
<organism>
    <name type="scientific">Salmonella paratyphi A (strain ATCC 9150 / SARB42)</name>
    <dbReference type="NCBI Taxonomy" id="295319"/>
    <lineage>
        <taxon>Bacteria</taxon>
        <taxon>Pseudomonadati</taxon>
        <taxon>Pseudomonadota</taxon>
        <taxon>Gammaproteobacteria</taxon>
        <taxon>Enterobacterales</taxon>
        <taxon>Enterobacteriaceae</taxon>
        <taxon>Salmonella</taxon>
    </lineage>
</organism>
<comment type="function">
    <text evidence="1">Catalyzes the tRNA-independent activation of glutamate in presence of ATP and the subsequent transfer of glutamate onto a tRNA(Asp). Glutamate is transferred on the 2-amino-5-(4,5-dihydroxy-2-cyclopenten-1-yl) moiety of the queuosine in the wobble position of the QUC anticodon.</text>
</comment>
<comment type="cofactor">
    <cofactor evidence="1">
        <name>Zn(2+)</name>
        <dbReference type="ChEBI" id="CHEBI:29105"/>
    </cofactor>
    <text evidence="1">Binds 1 zinc ion per subunit.</text>
</comment>
<comment type="similarity">
    <text evidence="1">Belongs to the class-I aminoacyl-tRNA synthetase family. GluQ subfamily.</text>
</comment>
<dbReference type="EC" id="6.1.1.-" evidence="1"/>
<dbReference type="EMBL" id="CP000026">
    <property type="protein sequence ID" value="AAV76224.1"/>
    <property type="molecule type" value="Genomic_DNA"/>
</dbReference>
<dbReference type="SMR" id="Q5PD33"/>
<dbReference type="KEGG" id="spt:SPA0191"/>
<dbReference type="HOGENOM" id="CLU_015768_0_1_6"/>
<dbReference type="Proteomes" id="UP000008185">
    <property type="component" value="Chromosome"/>
</dbReference>
<dbReference type="GO" id="GO:0005829">
    <property type="term" value="C:cytosol"/>
    <property type="evidence" value="ECO:0007669"/>
    <property type="project" value="TreeGrafter"/>
</dbReference>
<dbReference type="GO" id="GO:0005524">
    <property type="term" value="F:ATP binding"/>
    <property type="evidence" value="ECO:0007669"/>
    <property type="project" value="UniProtKB-KW"/>
</dbReference>
<dbReference type="GO" id="GO:0004818">
    <property type="term" value="F:glutamate-tRNA ligase activity"/>
    <property type="evidence" value="ECO:0007669"/>
    <property type="project" value="TreeGrafter"/>
</dbReference>
<dbReference type="GO" id="GO:0008270">
    <property type="term" value="F:zinc ion binding"/>
    <property type="evidence" value="ECO:0007669"/>
    <property type="project" value="UniProtKB-UniRule"/>
</dbReference>
<dbReference type="GO" id="GO:0006424">
    <property type="term" value="P:glutamyl-tRNA aminoacylation"/>
    <property type="evidence" value="ECO:0007669"/>
    <property type="project" value="InterPro"/>
</dbReference>
<dbReference type="GO" id="GO:0006400">
    <property type="term" value="P:tRNA modification"/>
    <property type="evidence" value="ECO:0007669"/>
    <property type="project" value="InterPro"/>
</dbReference>
<dbReference type="FunFam" id="3.40.50.620:FF:000093">
    <property type="entry name" value="Glutamyl-Q tRNA(Asp) synthetase"/>
    <property type="match status" value="1"/>
</dbReference>
<dbReference type="Gene3D" id="3.40.50.620">
    <property type="entry name" value="HUPs"/>
    <property type="match status" value="1"/>
</dbReference>
<dbReference type="HAMAP" id="MF_01428">
    <property type="entry name" value="Glu_Q_tRNA_synth"/>
    <property type="match status" value="1"/>
</dbReference>
<dbReference type="InterPro" id="IPR022380">
    <property type="entry name" value="Glu-Q_tRNA(Asp)_Synthase"/>
</dbReference>
<dbReference type="InterPro" id="IPR000924">
    <property type="entry name" value="Glu/Gln-tRNA-synth"/>
</dbReference>
<dbReference type="InterPro" id="IPR020058">
    <property type="entry name" value="Glu/Gln-tRNA-synth_Ib_cat-dom"/>
</dbReference>
<dbReference type="InterPro" id="IPR049940">
    <property type="entry name" value="GluQ/Sye"/>
</dbReference>
<dbReference type="InterPro" id="IPR014729">
    <property type="entry name" value="Rossmann-like_a/b/a_fold"/>
</dbReference>
<dbReference type="NCBIfam" id="NF004312">
    <property type="entry name" value="PRK05710.1-1"/>
    <property type="match status" value="1"/>
</dbReference>
<dbReference type="NCBIfam" id="NF004314">
    <property type="entry name" value="PRK05710.1-3"/>
    <property type="match status" value="1"/>
</dbReference>
<dbReference type="NCBIfam" id="TIGR03838">
    <property type="entry name" value="queuosine_YadB"/>
    <property type="match status" value="1"/>
</dbReference>
<dbReference type="PANTHER" id="PTHR43311">
    <property type="entry name" value="GLUTAMATE--TRNA LIGASE"/>
    <property type="match status" value="1"/>
</dbReference>
<dbReference type="PANTHER" id="PTHR43311:SF1">
    <property type="entry name" value="GLUTAMYL-Q TRNA(ASP) SYNTHETASE"/>
    <property type="match status" value="1"/>
</dbReference>
<dbReference type="Pfam" id="PF00749">
    <property type="entry name" value="tRNA-synt_1c"/>
    <property type="match status" value="1"/>
</dbReference>
<dbReference type="PRINTS" id="PR00987">
    <property type="entry name" value="TRNASYNTHGLU"/>
</dbReference>
<dbReference type="SUPFAM" id="SSF52374">
    <property type="entry name" value="Nucleotidylyl transferase"/>
    <property type="match status" value="1"/>
</dbReference>
<evidence type="ECO:0000255" key="1">
    <source>
        <dbReference type="HAMAP-Rule" id="MF_01428"/>
    </source>
</evidence>
<accession>Q5PD33</accession>
<name>GLUQ_SALPA</name>
<feature type="chain" id="PRO_0000208323" description="Glutamyl-Q tRNA(Asp) synthetase">
    <location>
        <begin position="1"/>
        <end position="298"/>
    </location>
</feature>
<feature type="short sequence motif" description="'HIGH' region">
    <location>
        <begin position="12"/>
        <end position="22"/>
    </location>
</feature>
<feature type="short sequence motif" description="'KMSKS' region">
    <location>
        <begin position="228"/>
        <end position="232"/>
    </location>
</feature>
<feature type="binding site" evidence="1">
    <location>
        <begin position="9"/>
        <end position="13"/>
    </location>
    <ligand>
        <name>L-glutamate</name>
        <dbReference type="ChEBI" id="CHEBI:29985"/>
    </ligand>
</feature>
<feature type="binding site" evidence="1">
    <location>
        <position position="45"/>
    </location>
    <ligand>
        <name>L-glutamate</name>
        <dbReference type="ChEBI" id="CHEBI:29985"/>
    </ligand>
</feature>
<feature type="binding site" evidence="1">
    <location>
        <position position="101"/>
    </location>
    <ligand>
        <name>Zn(2+)</name>
        <dbReference type="ChEBI" id="CHEBI:29105"/>
    </ligand>
</feature>
<feature type="binding site" evidence="1">
    <location>
        <position position="103"/>
    </location>
    <ligand>
        <name>Zn(2+)</name>
        <dbReference type="ChEBI" id="CHEBI:29105"/>
    </ligand>
</feature>
<feature type="binding site" evidence="1">
    <location>
        <position position="115"/>
    </location>
    <ligand>
        <name>Zn(2+)</name>
        <dbReference type="ChEBI" id="CHEBI:29105"/>
    </ligand>
</feature>
<feature type="binding site" evidence="1">
    <location>
        <position position="119"/>
    </location>
    <ligand>
        <name>Zn(2+)</name>
        <dbReference type="ChEBI" id="CHEBI:29105"/>
    </ligand>
</feature>
<feature type="binding site" evidence="1">
    <location>
        <position position="172"/>
    </location>
    <ligand>
        <name>L-glutamate</name>
        <dbReference type="ChEBI" id="CHEBI:29985"/>
    </ligand>
</feature>
<feature type="binding site" evidence="1">
    <location>
        <position position="190"/>
    </location>
    <ligand>
        <name>L-glutamate</name>
        <dbReference type="ChEBI" id="CHEBI:29985"/>
    </ligand>
</feature>
<feature type="binding site" evidence="1">
    <location>
        <position position="231"/>
    </location>
    <ligand>
        <name>ATP</name>
        <dbReference type="ChEBI" id="CHEBI:30616"/>
    </ligand>
</feature>
<gene>
    <name evidence="1" type="primary">gluQ</name>
    <name type="ordered locus">SPA0191</name>
</gene>
<sequence length="298" mass="33597">MTDSHYIGRFAPSPSGELHFGSLIAALGSYLQARAQRGIWRVRIEDIDPPREVPGAAATILRQLEHYGLHWDGEVLWQSQRHEAYREALAWLHEQGLSYYCTCPRSRIQRLGGIYDGHCRTLCHGPENAAVRIKQQHPVMHFHDALRGDIQADPQLASEDFIIHRRDGLFAYNLAVVVDDHFQGVTEIVRGADLIEPTVRQLSLYKQFGWRAPGYVHLPLALNEQGAKLSKQNHAPALATGDPRPVLVQALRFLGQRDVVAWQEMSVEELLRFAVTHWRLTAVPTSANVNPAFSNASR</sequence>
<keyword id="KW-0030">Aminoacyl-tRNA synthetase</keyword>
<keyword id="KW-0067">ATP-binding</keyword>
<keyword id="KW-0436">Ligase</keyword>
<keyword id="KW-0479">Metal-binding</keyword>
<keyword id="KW-0547">Nucleotide-binding</keyword>
<keyword id="KW-0862">Zinc</keyword>